<gene>
    <name evidence="1" type="primary">mshD</name>
    <name type="ordered locus">Mjls_4907</name>
</gene>
<sequence>MTSIDWRSALTDDEQGSIRDIVAAATRHDGVAPVGDQVLRELPADRTRHLVAVDPDAGAVVGYLNLAPASDTAPPMAELVVHPDFRRRGTGAAMARAGLAEGGTHARIWAHGNLEAARATARTLGLQVVRELLQMRRPLTDLPPVTVADGVRLATYSGPGDDPELLRVNNSAFAWHPEQGGWTDADIAERRAEAWFDPAGLFMAFDDASGKLLGFHWTKVHGPDLGEVYVVGVDPAAQGRGLGATLTLTGLHHLAERLSNSPQPTVMLYVEADNGAAVKTYRRLGFDVSSVDAAYAAVAD</sequence>
<organism>
    <name type="scientific">Mycobacterium sp. (strain JLS)</name>
    <dbReference type="NCBI Taxonomy" id="164757"/>
    <lineage>
        <taxon>Bacteria</taxon>
        <taxon>Bacillati</taxon>
        <taxon>Actinomycetota</taxon>
        <taxon>Actinomycetes</taxon>
        <taxon>Mycobacteriales</taxon>
        <taxon>Mycobacteriaceae</taxon>
        <taxon>Mycobacterium</taxon>
    </lineage>
</organism>
<dbReference type="EC" id="2.3.1.189" evidence="1"/>
<dbReference type="EMBL" id="CP000580">
    <property type="protein sequence ID" value="ABO00673.1"/>
    <property type="molecule type" value="Genomic_DNA"/>
</dbReference>
<dbReference type="SMR" id="A3Q695"/>
<dbReference type="KEGG" id="mjl:Mjls_4907"/>
<dbReference type="HOGENOM" id="CLU_068014_0_0_11"/>
<dbReference type="BioCyc" id="MSP164757:G1G8C-4957-MONOMER"/>
<dbReference type="GO" id="GO:0035447">
    <property type="term" value="F:mycothiol synthase activity"/>
    <property type="evidence" value="ECO:0007669"/>
    <property type="project" value="UniProtKB-UniRule"/>
</dbReference>
<dbReference type="GO" id="GO:0008999">
    <property type="term" value="F:protein-N-terminal-alanine acetyltransferase activity"/>
    <property type="evidence" value="ECO:0007669"/>
    <property type="project" value="TreeGrafter"/>
</dbReference>
<dbReference type="GO" id="GO:0010125">
    <property type="term" value="P:mycothiol biosynthetic process"/>
    <property type="evidence" value="ECO:0007669"/>
    <property type="project" value="UniProtKB-UniRule"/>
</dbReference>
<dbReference type="CDD" id="cd04301">
    <property type="entry name" value="NAT_SF"/>
    <property type="match status" value="2"/>
</dbReference>
<dbReference type="Gene3D" id="3.40.630.30">
    <property type="match status" value="1"/>
</dbReference>
<dbReference type="HAMAP" id="MF_01698">
    <property type="entry name" value="MshD"/>
    <property type="match status" value="1"/>
</dbReference>
<dbReference type="InterPro" id="IPR016181">
    <property type="entry name" value="Acyl_CoA_acyltransferase"/>
</dbReference>
<dbReference type="InterPro" id="IPR000182">
    <property type="entry name" value="GNAT_dom"/>
</dbReference>
<dbReference type="InterPro" id="IPR050276">
    <property type="entry name" value="MshD_Acetyltransferase"/>
</dbReference>
<dbReference type="InterPro" id="IPR017813">
    <property type="entry name" value="Mycothiol_AcTrfase"/>
</dbReference>
<dbReference type="NCBIfam" id="TIGR03448">
    <property type="entry name" value="mycothiol_MshD"/>
    <property type="match status" value="1"/>
</dbReference>
<dbReference type="PANTHER" id="PTHR43617">
    <property type="entry name" value="L-AMINO ACID N-ACETYLTRANSFERASE"/>
    <property type="match status" value="1"/>
</dbReference>
<dbReference type="PANTHER" id="PTHR43617:SF31">
    <property type="entry name" value="MYCOTHIOL ACETYLTRANSFERASE"/>
    <property type="match status" value="1"/>
</dbReference>
<dbReference type="Pfam" id="PF00583">
    <property type="entry name" value="Acetyltransf_1"/>
    <property type="match status" value="2"/>
</dbReference>
<dbReference type="PIRSF" id="PIRSF021524">
    <property type="entry name" value="MSH_acetyltransferase"/>
    <property type="match status" value="1"/>
</dbReference>
<dbReference type="SUPFAM" id="SSF55729">
    <property type="entry name" value="Acyl-CoA N-acyltransferases (Nat)"/>
    <property type="match status" value="1"/>
</dbReference>
<dbReference type="PROSITE" id="PS51186">
    <property type="entry name" value="GNAT"/>
    <property type="match status" value="2"/>
</dbReference>
<proteinExistence type="inferred from homology"/>
<comment type="function">
    <text evidence="1">Catalyzes the transfer of acetyl from acetyl-CoA to desacetylmycothiol (Cys-GlcN-Ins) to form mycothiol.</text>
</comment>
<comment type="catalytic activity">
    <reaction evidence="1">
        <text>1D-myo-inositol 2-(L-cysteinylamino)-2-deoxy-alpha-D-glucopyranoside + acetyl-CoA = mycothiol + CoA + H(+)</text>
        <dbReference type="Rhea" id="RHEA:26172"/>
        <dbReference type="ChEBI" id="CHEBI:15378"/>
        <dbReference type="ChEBI" id="CHEBI:16768"/>
        <dbReference type="ChEBI" id="CHEBI:57287"/>
        <dbReference type="ChEBI" id="CHEBI:57288"/>
        <dbReference type="ChEBI" id="CHEBI:58887"/>
        <dbReference type="EC" id="2.3.1.189"/>
    </reaction>
</comment>
<comment type="subunit">
    <text evidence="1">Monomer.</text>
</comment>
<comment type="similarity">
    <text evidence="1">Belongs to the acetyltransferase family. MshD subfamily.</text>
</comment>
<evidence type="ECO:0000255" key="1">
    <source>
        <dbReference type="HAMAP-Rule" id="MF_01698"/>
    </source>
</evidence>
<keyword id="KW-0012">Acyltransferase</keyword>
<keyword id="KW-0677">Repeat</keyword>
<keyword id="KW-0808">Transferase</keyword>
<reference key="1">
    <citation type="submission" date="2007-02" db="EMBL/GenBank/DDBJ databases">
        <title>Complete sequence of Mycobacterium sp. JLS.</title>
        <authorList>
            <consortium name="US DOE Joint Genome Institute"/>
            <person name="Copeland A."/>
            <person name="Lucas S."/>
            <person name="Lapidus A."/>
            <person name="Barry K."/>
            <person name="Detter J.C."/>
            <person name="Glavina del Rio T."/>
            <person name="Hammon N."/>
            <person name="Israni S."/>
            <person name="Dalin E."/>
            <person name="Tice H."/>
            <person name="Pitluck S."/>
            <person name="Chain P."/>
            <person name="Malfatti S."/>
            <person name="Shin M."/>
            <person name="Vergez L."/>
            <person name="Schmutz J."/>
            <person name="Larimer F."/>
            <person name="Land M."/>
            <person name="Hauser L."/>
            <person name="Kyrpides N."/>
            <person name="Mikhailova N."/>
            <person name="Miller C.D."/>
            <person name="Anderson A.J."/>
            <person name="Sims R.C."/>
            <person name="Richardson P."/>
        </authorList>
    </citation>
    <scope>NUCLEOTIDE SEQUENCE [LARGE SCALE GENOMIC DNA]</scope>
    <source>
        <strain>JLS</strain>
    </source>
</reference>
<name>MSHD_MYCSJ</name>
<feature type="chain" id="PRO_0000400276" description="Mycothiol acetyltransferase">
    <location>
        <begin position="1"/>
        <end position="300"/>
    </location>
</feature>
<feature type="domain" description="N-acetyltransferase 1" evidence="1">
    <location>
        <begin position="4"/>
        <end position="140"/>
    </location>
</feature>
<feature type="domain" description="N-acetyltransferase 2" evidence="1">
    <location>
        <begin position="151"/>
        <end position="300"/>
    </location>
</feature>
<feature type="binding site" evidence="1">
    <location>
        <position position="36"/>
    </location>
    <ligand>
        <name>1D-myo-inositol 2-(L-cysteinylamino)-2-deoxy-alpha-D-glucopyranoside</name>
        <dbReference type="ChEBI" id="CHEBI:58887"/>
    </ligand>
</feature>
<feature type="binding site" evidence="1">
    <location>
        <begin position="79"/>
        <end position="81"/>
    </location>
    <ligand>
        <name>acetyl-CoA</name>
        <dbReference type="ChEBI" id="CHEBI:57288"/>
        <label>1</label>
    </ligand>
</feature>
<feature type="binding site" evidence="1">
    <location>
        <position position="178"/>
    </location>
    <ligand>
        <name>1D-myo-inositol 2-(L-cysteinylamino)-2-deoxy-alpha-D-glucopyranoside</name>
        <dbReference type="ChEBI" id="CHEBI:58887"/>
    </ligand>
</feature>
<feature type="binding site" evidence="1">
    <location>
        <position position="219"/>
    </location>
    <ligand>
        <name>1D-myo-inositol 2-(L-cysteinylamino)-2-deoxy-alpha-D-glucopyranoside</name>
        <dbReference type="ChEBI" id="CHEBI:58887"/>
    </ligand>
</feature>
<feature type="binding site" evidence="1">
    <location>
        <position position="227"/>
    </location>
    <ligand>
        <name>1D-myo-inositol 2-(L-cysteinylamino)-2-deoxy-alpha-D-glucopyranoside</name>
        <dbReference type="ChEBI" id="CHEBI:58887"/>
    </ligand>
</feature>
<feature type="binding site" evidence="1">
    <location>
        <begin position="231"/>
        <end position="233"/>
    </location>
    <ligand>
        <name>acetyl-CoA</name>
        <dbReference type="ChEBI" id="CHEBI:57288"/>
        <label>2</label>
    </ligand>
</feature>
<feature type="binding site" evidence="1">
    <location>
        <position position="269"/>
    </location>
    <ligand>
        <name>1D-myo-inositol 2-(L-cysteinylamino)-2-deoxy-alpha-D-glucopyranoside</name>
        <dbReference type="ChEBI" id="CHEBI:58887"/>
    </ligand>
</feature>
<feature type="binding site" evidence="1">
    <location>
        <begin position="274"/>
        <end position="279"/>
    </location>
    <ligand>
        <name>acetyl-CoA</name>
        <dbReference type="ChEBI" id="CHEBI:57288"/>
        <label>2</label>
    </ligand>
</feature>
<accession>A3Q695</accession>
<protein>
    <recommendedName>
        <fullName evidence="1">Mycothiol acetyltransferase</fullName>
        <shortName evidence="1">MSH acetyltransferase</shortName>
        <ecNumber evidence="1">2.3.1.189</ecNumber>
    </recommendedName>
    <alternativeName>
        <fullName evidence="1">Mycothiol synthase</fullName>
    </alternativeName>
</protein>